<sequence length="378" mass="39839">MNAPTTVADSVTVPVSLGDRSYDILIGKGLVERAGEEVAKRLKGVRVAIVTDENVAAVHLERLQASFARAGIDSTPVIVAPGEKSKSFATLETVTNAILAAKLERGDAVVALGGGVVGDLSGFVAGIVRRGMNFVQMPTSLLAQVDSSVGGKTGINTAHGKNLVGVFNQPQLVLADTQVLDTLSPREFRAGYAEVAKYGLIDRPDFFAWLEANWQEVFSGGAARTKAIAESCRSKAAVVARDERETGDRALLNLGHTFGHALESATGYDSSRLVHGEGVAIGMALAYRFSARMNLAGIEAAERVEAHLKAVGLPVSLAEVPGGLPPAEKLMDYIAQDKKVTRGTLTFILTHGIGQSFIAKDVPPAAVLEFLKERLAIA</sequence>
<evidence type="ECO:0000255" key="1">
    <source>
        <dbReference type="HAMAP-Rule" id="MF_00110"/>
    </source>
</evidence>
<name>AROB_BRUME</name>
<reference key="1">
    <citation type="journal article" date="2002" name="Proc. Natl. Acad. Sci. U.S.A.">
        <title>The genome sequence of the facultative intracellular pathogen Brucella melitensis.</title>
        <authorList>
            <person name="DelVecchio V.G."/>
            <person name="Kapatral V."/>
            <person name="Redkar R.J."/>
            <person name="Patra G."/>
            <person name="Mujer C."/>
            <person name="Los T."/>
            <person name="Ivanova N."/>
            <person name="Anderson I."/>
            <person name="Bhattacharyya A."/>
            <person name="Lykidis A."/>
            <person name="Reznik G."/>
            <person name="Jablonski L."/>
            <person name="Larsen N."/>
            <person name="D'Souza M."/>
            <person name="Bernal A."/>
            <person name="Mazur M."/>
            <person name="Goltsman E."/>
            <person name="Selkov E."/>
            <person name="Elzer P.H."/>
            <person name="Hagius S."/>
            <person name="O'Callaghan D."/>
            <person name="Letesson J.-J."/>
            <person name="Haselkorn R."/>
            <person name="Kyrpides N.C."/>
            <person name="Overbeek R."/>
        </authorList>
    </citation>
    <scope>NUCLEOTIDE SEQUENCE [LARGE SCALE GENOMIC DNA]</scope>
    <source>
        <strain>ATCC 23456 / CCUG 17765 / NCTC 10094 / 16M</strain>
    </source>
</reference>
<keyword id="KW-0028">Amino-acid biosynthesis</keyword>
<keyword id="KW-0057">Aromatic amino acid biosynthesis</keyword>
<keyword id="KW-0170">Cobalt</keyword>
<keyword id="KW-0963">Cytoplasm</keyword>
<keyword id="KW-0456">Lyase</keyword>
<keyword id="KW-0479">Metal-binding</keyword>
<keyword id="KW-0520">NAD</keyword>
<keyword id="KW-0547">Nucleotide-binding</keyword>
<keyword id="KW-0862">Zinc</keyword>
<proteinExistence type="inferred from homology"/>
<dbReference type="EC" id="4.2.3.4" evidence="1"/>
<dbReference type="EMBL" id="AE008917">
    <property type="protein sequence ID" value="AAL51225.1"/>
    <property type="molecule type" value="Genomic_DNA"/>
</dbReference>
<dbReference type="PIR" id="AF3257">
    <property type="entry name" value="AF3257"/>
</dbReference>
<dbReference type="RefSeq" id="WP_004684507.1">
    <property type="nucleotide sequence ID" value="NZ_GG703778.1"/>
</dbReference>
<dbReference type="SMR" id="P63615"/>
<dbReference type="GeneID" id="97534707"/>
<dbReference type="KEGG" id="bme:BMEI0043"/>
<dbReference type="KEGG" id="bmel:DK63_1389"/>
<dbReference type="PATRIC" id="fig|224914.52.peg.1467"/>
<dbReference type="eggNOG" id="COG0337">
    <property type="taxonomic scope" value="Bacteria"/>
</dbReference>
<dbReference type="PhylomeDB" id="P63615"/>
<dbReference type="UniPathway" id="UPA00053">
    <property type="reaction ID" value="UER00085"/>
</dbReference>
<dbReference type="Proteomes" id="UP000000419">
    <property type="component" value="Chromosome I"/>
</dbReference>
<dbReference type="GO" id="GO:0005737">
    <property type="term" value="C:cytoplasm"/>
    <property type="evidence" value="ECO:0007669"/>
    <property type="project" value="UniProtKB-SubCell"/>
</dbReference>
<dbReference type="GO" id="GO:0003856">
    <property type="term" value="F:3-dehydroquinate synthase activity"/>
    <property type="evidence" value="ECO:0007669"/>
    <property type="project" value="UniProtKB-UniRule"/>
</dbReference>
<dbReference type="GO" id="GO:0046872">
    <property type="term" value="F:metal ion binding"/>
    <property type="evidence" value="ECO:0007669"/>
    <property type="project" value="UniProtKB-KW"/>
</dbReference>
<dbReference type="GO" id="GO:0000166">
    <property type="term" value="F:nucleotide binding"/>
    <property type="evidence" value="ECO:0007669"/>
    <property type="project" value="UniProtKB-KW"/>
</dbReference>
<dbReference type="GO" id="GO:0008652">
    <property type="term" value="P:amino acid biosynthetic process"/>
    <property type="evidence" value="ECO:0007669"/>
    <property type="project" value="UniProtKB-KW"/>
</dbReference>
<dbReference type="GO" id="GO:0009073">
    <property type="term" value="P:aromatic amino acid family biosynthetic process"/>
    <property type="evidence" value="ECO:0007669"/>
    <property type="project" value="UniProtKB-KW"/>
</dbReference>
<dbReference type="GO" id="GO:0009423">
    <property type="term" value="P:chorismate biosynthetic process"/>
    <property type="evidence" value="ECO:0007669"/>
    <property type="project" value="UniProtKB-UniRule"/>
</dbReference>
<dbReference type="CDD" id="cd08195">
    <property type="entry name" value="DHQS"/>
    <property type="match status" value="1"/>
</dbReference>
<dbReference type="FunFam" id="3.40.50.1970:FF:000007">
    <property type="entry name" value="Pentafunctional AROM polypeptide"/>
    <property type="match status" value="1"/>
</dbReference>
<dbReference type="Gene3D" id="3.40.50.1970">
    <property type="match status" value="1"/>
</dbReference>
<dbReference type="Gene3D" id="1.20.1090.10">
    <property type="entry name" value="Dehydroquinate synthase-like - alpha domain"/>
    <property type="match status" value="1"/>
</dbReference>
<dbReference type="HAMAP" id="MF_00110">
    <property type="entry name" value="DHQ_synthase"/>
    <property type="match status" value="1"/>
</dbReference>
<dbReference type="InterPro" id="IPR050071">
    <property type="entry name" value="Dehydroquinate_synthase"/>
</dbReference>
<dbReference type="InterPro" id="IPR016037">
    <property type="entry name" value="DHQ_synth_AroB"/>
</dbReference>
<dbReference type="InterPro" id="IPR030963">
    <property type="entry name" value="DHQ_synth_fam"/>
</dbReference>
<dbReference type="InterPro" id="IPR030960">
    <property type="entry name" value="DHQS/DOIS_N"/>
</dbReference>
<dbReference type="InterPro" id="IPR056179">
    <property type="entry name" value="DHQS_C"/>
</dbReference>
<dbReference type="NCBIfam" id="TIGR01357">
    <property type="entry name" value="aroB"/>
    <property type="match status" value="1"/>
</dbReference>
<dbReference type="PANTHER" id="PTHR43622">
    <property type="entry name" value="3-DEHYDROQUINATE SYNTHASE"/>
    <property type="match status" value="1"/>
</dbReference>
<dbReference type="PANTHER" id="PTHR43622:SF7">
    <property type="entry name" value="3-DEHYDROQUINATE SYNTHASE, CHLOROPLASTIC"/>
    <property type="match status" value="1"/>
</dbReference>
<dbReference type="Pfam" id="PF01761">
    <property type="entry name" value="DHQ_synthase"/>
    <property type="match status" value="1"/>
</dbReference>
<dbReference type="Pfam" id="PF24621">
    <property type="entry name" value="DHQS_C"/>
    <property type="match status" value="1"/>
</dbReference>
<dbReference type="PIRSF" id="PIRSF001455">
    <property type="entry name" value="DHQ_synth"/>
    <property type="match status" value="1"/>
</dbReference>
<dbReference type="SUPFAM" id="SSF56796">
    <property type="entry name" value="Dehydroquinate synthase-like"/>
    <property type="match status" value="1"/>
</dbReference>
<comment type="function">
    <text evidence="1">Catalyzes the conversion of 3-deoxy-D-arabino-heptulosonate 7-phosphate (DAHP) to dehydroquinate (DHQ).</text>
</comment>
<comment type="catalytic activity">
    <reaction evidence="1">
        <text>7-phospho-2-dehydro-3-deoxy-D-arabino-heptonate = 3-dehydroquinate + phosphate</text>
        <dbReference type="Rhea" id="RHEA:21968"/>
        <dbReference type="ChEBI" id="CHEBI:32364"/>
        <dbReference type="ChEBI" id="CHEBI:43474"/>
        <dbReference type="ChEBI" id="CHEBI:58394"/>
        <dbReference type="EC" id="4.2.3.4"/>
    </reaction>
</comment>
<comment type="cofactor">
    <cofactor evidence="1">
        <name>NAD(+)</name>
        <dbReference type="ChEBI" id="CHEBI:57540"/>
    </cofactor>
</comment>
<comment type="cofactor">
    <cofactor evidence="1">
        <name>Co(2+)</name>
        <dbReference type="ChEBI" id="CHEBI:48828"/>
    </cofactor>
    <cofactor evidence="1">
        <name>Zn(2+)</name>
        <dbReference type="ChEBI" id="CHEBI:29105"/>
    </cofactor>
    <text evidence="1">Binds 1 divalent metal cation per subunit. Can use either Co(2+) or Zn(2+).</text>
</comment>
<comment type="pathway">
    <text evidence="1">Metabolic intermediate biosynthesis; chorismate biosynthesis; chorismate from D-erythrose 4-phosphate and phosphoenolpyruvate: step 2/7.</text>
</comment>
<comment type="subcellular location">
    <subcellularLocation>
        <location evidence="1">Cytoplasm</location>
    </subcellularLocation>
</comment>
<comment type="similarity">
    <text evidence="1">Belongs to the sugar phosphate cyclases superfamily. Dehydroquinate synthase family.</text>
</comment>
<gene>
    <name evidence="1" type="primary">aroB</name>
    <name type="ordered locus">BMEI0043</name>
</gene>
<feature type="chain" id="PRO_0000140715" description="3-dehydroquinate synthase">
    <location>
        <begin position="1"/>
        <end position="378"/>
    </location>
</feature>
<feature type="binding site" evidence="1">
    <location>
        <begin position="115"/>
        <end position="119"/>
    </location>
    <ligand>
        <name>NAD(+)</name>
        <dbReference type="ChEBI" id="CHEBI:57540"/>
    </ligand>
</feature>
<feature type="binding site" evidence="1">
    <location>
        <begin position="139"/>
        <end position="140"/>
    </location>
    <ligand>
        <name>NAD(+)</name>
        <dbReference type="ChEBI" id="CHEBI:57540"/>
    </ligand>
</feature>
<feature type="binding site" evidence="1">
    <location>
        <position position="152"/>
    </location>
    <ligand>
        <name>NAD(+)</name>
        <dbReference type="ChEBI" id="CHEBI:57540"/>
    </ligand>
</feature>
<feature type="binding site" evidence="1">
    <location>
        <position position="161"/>
    </location>
    <ligand>
        <name>NAD(+)</name>
        <dbReference type="ChEBI" id="CHEBI:57540"/>
    </ligand>
</feature>
<feature type="binding site" evidence="1">
    <location>
        <position position="194"/>
    </location>
    <ligand>
        <name>Zn(2+)</name>
        <dbReference type="ChEBI" id="CHEBI:29105"/>
    </ligand>
</feature>
<feature type="binding site" evidence="1">
    <location>
        <position position="256"/>
    </location>
    <ligand>
        <name>Zn(2+)</name>
        <dbReference type="ChEBI" id="CHEBI:29105"/>
    </ligand>
</feature>
<feature type="binding site" evidence="1">
    <location>
        <position position="275"/>
    </location>
    <ligand>
        <name>Zn(2+)</name>
        <dbReference type="ChEBI" id="CHEBI:29105"/>
    </ligand>
</feature>
<protein>
    <recommendedName>
        <fullName evidence="1">3-dehydroquinate synthase</fullName>
        <shortName evidence="1">DHQS</shortName>
        <ecNumber evidence="1">4.2.3.4</ecNumber>
    </recommendedName>
</protein>
<accession>P63615</accession>
<accession>Q8YJN9</accession>
<organism>
    <name type="scientific">Brucella melitensis biotype 1 (strain ATCC 23456 / CCUG 17765 / NCTC 10094 / 16M)</name>
    <dbReference type="NCBI Taxonomy" id="224914"/>
    <lineage>
        <taxon>Bacteria</taxon>
        <taxon>Pseudomonadati</taxon>
        <taxon>Pseudomonadota</taxon>
        <taxon>Alphaproteobacteria</taxon>
        <taxon>Hyphomicrobiales</taxon>
        <taxon>Brucellaceae</taxon>
        <taxon>Brucella/Ochrobactrum group</taxon>
        <taxon>Brucella</taxon>
    </lineage>
</organism>